<proteinExistence type="inferred from homology"/>
<dbReference type="EMBL" id="CP001087">
    <property type="protein sequence ID" value="ACN16684.1"/>
    <property type="molecule type" value="Genomic_DNA"/>
</dbReference>
<dbReference type="RefSeq" id="WP_015905434.1">
    <property type="nucleotide sequence ID" value="NC_012108.1"/>
</dbReference>
<dbReference type="SMR" id="C0Q9W6"/>
<dbReference type="STRING" id="177437.HRM2_36190"/>
<dbReference type="KEGG" id="dat:HRM2_36190"/>
<dbReference type="eggNOG" id="COG0197">
    <property type="taxonomic scope" value="Bacteria"/>
</dbReference>
<dbReference type="HOGENOM" id="CLU_078858_2_1_7"/>
<dbReference type="OrthoDB" id="9802589at2"/>
<dbReference type="Proteomes" id="UP000000442">
    <property type="component" value="Chromosome"/>
</dbReference>
<dbReference type="GO" id="GO:0022625">
    <property type="term" value="C:cytosolic large ribosomal subunit"/>
    <property type="evidence" value="ECO:0007669"/>
    <property type="project" value="TreeGrafter"/>
</dbReference>
<dbReference type="GO" id="GO:0019843">
    <property type="term" value="F:rRNA binding"/>
    <property type="evidence" value="ECO:0007669"/>
    <property type="project" value="UniProtKB-UniRule"/>
</dbReference>
<dbReference type="GO" id="GO:0003735">
    <property type="term" value="F:structural constituent of ribosome"/>
    <property type="evidence" value="ECO:0007669"/>
    <property type="project" value="InterPro"/>
</dbReference>
<dbReference type="GO" id="GO:0000049">
    <property type="term" value="F:tRNA binding"/>
    <property type="evidence" value="ECO:0007669"/>
    <property type="project" value="UniProtKB-KW"/>
</dbReference>
<dbReference type="GO" id="GO:0006412">
    <property type="term" value="P:translation"/>
    <property type="evidence" value="ECO:0007669"/>
    <property type="project" value="UniProtKB-UniRule"/>
</dbReference>
<dbReference type="CDD" id="cd01433">
    <property type="entry name" value="Ribosomal_L16_L10e"/>
    <property type="match status" value="1"/>
</dbReference>
<dbReference type="FunFam" id="3.90.1170.10:FF:000001">
    <property type="entry name" value="50S ribosomal protein L16"/>
    <property type="match status" value="1"/>
</dbReference>
<dbReference type="Gene3D" id="3.90.1170.10">
    <property type="entry name" value="Ribosomal protein L10e/L16"/>
    <property type="match status" value="1"/>
</dbReference>
<dbReference type="HAMAP" id="MF_01342">
    <property type="entry name" value="Ribosomal_uL16"/>
    <property type="match status" value="1"/>
</dbReference>
<dbReference type="InterPro" id="IPR047873">
    <property type="entry name" value="Ribosomal_uL16"/>
</dbReference>
<dbReference type="InterPro" id="IPR000114">
    <property type="entry name" value="Ribosomal_uL16_bact-type"/>
</dbReference>
<dbReference type="InterPro" id="IPR020798">
    <property type="entry name" value="Ribosomal_uL16_CS"/>
</dbReference>
<dbReference type="InterPro" id="IPR016180">
    <property type="entry name" value="Ribosomal_uL16_dom"/>
</dbReference>
<dbReference type="InterPro" id="IPR036920">
    <property type="entry name" value="Ribosomal_uL16_sf"/>
</dbReference>
<dbReference type="NCBIfam" id="TIGR01164">
    <property type="entry name" value="rplP_bact"/>
    <property type="match status" value="1"/>
</dbReference>
<dbReference type="PANTHER" id="PTHR12220">
    <property type="entry name" value="50S/60S RIBOSOMAL PROTEIN L16"/>
    <property type="match status" value="1"/>
</dbReference>
<dbReference type="PANTHER" id="PTHR12220:SF13">
    <property type="entry name" value="LARGE RIBOSOMAL SUBUNIT PROTEIN UL16M"/>
    <property type="match status" value="1"/>
</dbReference>
<dbReference type="Pfam" id="PF00252">
    <property type="entry name" value="Ribosomal_L16"/>
    <property type="match status" value="1"/>
</dbReference>
<dbReference type="PRINTS" id="PR00060">
    <property type="entry name" value="RIBOSOMALL16"/>
</dbReference>
<dbReference type="SUPFAM" id="SSF54686">
    <property type="entry name" value="Ribosomal protein L16p/L10e"/>
    <property type="match status" value="1"/>
</dbReference>
<dbReference type="PROSITE" id="PS00701">
    <property type="entry name" value="RIBOSOMAL_L16_2"/>
    <property type="match status" value="1"/>
</dbReference>
<evidence type="ECO:0000255" key="1">
    <source>
        <dbReference type="HAMAP-Rule" id="MF_01342"/>
    </source>
</evidence>
<evidence type="ECO:0000305" key="2"/>
<name>RL16_DESAH</name>
<protein>
    <recommendedName>
        <fullName evidence="1">Large ribosomal subunit protein uL16</fullName>
    </recommendedName>
    <alternativeName>
        <fullName evidence="2">50S ribosomal protein L16</fullName>
    </alternativeName>
</protein>
<gene>
    <name evidence="1" type="primary">rplP</name>
    <name type="ordered locus">HRM2_36190</name>
</gene>
<organism>
    <name type="scientific">Desulforapulum autotrophicum (strain ATCC 43914 / DSM 3382 / VKM B-1955 / HRM2)</name>
    <name type="common">Desulfobacterium autotrophicum</name>
    <dbReference type="NCBI Taxonomy" id="177437"/>
    <lineage>
        <taxon>Bacteria</taxon>
        <taxon>Pseudomonadati</taxon>
        <taxon>Thermodesulfobacteriota</taxon>
        <taxon>Desulfobacteria</taxon>
        <taxon>Desulfobacterales</taxon>
        <taxon>Desulfobacteraceae</taxon>
        <taxon>Desulforapulum</taxon>
    </lineage>
</organism>
<keyword id="KW-1185">Reference proteome</keyword>
<keyword id="KW-0687">Ribonucleoprotein</keyword>
<keyword id="KW-0689">Ribosomal protein</keyword>
<keyword id="KW-0694">RNA-binding</keyword>
<keyword id="KW-0699">rRNA-binding</keyword>
<keyword id="KW-0820">tRNA-binding</keyword>
<reference key="1">
    <citation type="journal article" date="2009" name="Environ. Microbiol.">
        <title>Genome sequence of Desulfobacterium autotrophicum HRM2, a marine sulfate reducer oxidizing organic carbon completely to carbon dioxide.</title>
        <authorList>
            <person name="Strittmatter A.W."/>
            <person name="Liesegang H."/>
            <person name="Rabus R."/>
            <person name="Decker I."/>
            <person name="Amann J."/>
            <person name="Andres S."/>
            <person name="Henne A."/>
            <person name="Fricke W.F."/>
            <person name="Martinez-Arias R."/>
            <person name="Bartels D."/>
            <person name="Goesmann A."/>
            <person name="Krause L."/>
            <person name="Puehler A."/>
            <person name="Klenk H.P."/>
            <person name="Richter M."/>
            <person name="Schuler M."/>
            <person name="Gloeckner F.O."/>
            <person name="Meyerdierks A."/>
            <person name="Gottschalk G."/>
            <person name="Amann R."/>
        </authorList>
    </citation>
    <scope>NUCLEOTIDE SEQUENCE [LARGE SCALE GENOMIC DNA]</scope>
    <source>
        <strain>ATCC 43914 / DSM 3382 / VKM B-1955 / HRM2</strain>
    </source>
</reference>
<sequence length="135" mass="15287">MLSPKKMKYRKRMRGRLKGKPTGGTDLTFGDFGLQATECGYINARQIEAARIALTRKIKRTGKTWIRFFPDKPVTKKPAEVRMGKGKGPTDAWVAAIRPGRILYEMEGVPRELAKEALRLAAHKLSVKTRFVERS</sequence>
<comment type="function">
    <text evidence="1">Binds 23S rRNA and is also seen to make contacts with the A and possibly P site tRNAs.</text>
</comment>
<comment type="subunit">
    <text evidence="1">Part of the 50S ribosomal subunit.</text>
</comment>
<comment type="similarity">
    <text evidence="1">Belongs to the universal ribosomal protein uL16 family.</text>
</comment>
<accession>C0Q9W6</accession>
<feature type="chain" id="PRO_1000214726" description="Large ribosomal subunit protein uL16">
    <location>
        <begin position="1"/>
        <end position="135"/>
    </location>
</feature>